<name>HEMA_INCTA</name>
<keyword id="KW-1015">Disulfide bond</keyword>
<keyword id="KW-1170">Fusion of virus membrane with host endosomal membrane</keyword>
<keyword id="KW-1168">Fusion of virus membrane with host membrane</keyword>
<keyword id="KW-0325">Glycoprotein</keyword>
<keyword id="KW-0348">Hemagglutinin</keyword>
<keyword id="KW-1032">Host cell membrane</keyword>
<keyword id="KW-1043">Host membrane</keyword>
<keyword id="KW-0945">Host-virus interaction</keyword>
<keyword id="KW-0378">Hydrolase</keyword>
<keyword id="KW-0472">Membrane</keyword>
<keyword id="KW-0812">Transmembrane</keyword>
<keyword id="KW-1133">Transmembrane helix</keyword>
<keyword id="KW-1161">Viral attachment to host cell</keyword>
<keyword id="KW-0261">Viral envelope protein</keyword>
<keyword id="KW-1162">Viral penetration into host cytoplasm</keyword>
<keyword id="KW-0946">Virion</keyword>
<keyword id="KW-1164">Virus endocytosis by host</keyword>
<keyword id="KW-1160">Virus entry into host cell</keyword>
<comment type="function">
    <text evidence="1">Binds to the N-acetyl-9-O-acetylneuraminic acid residues on the cell surface, bringing about the attachment of the virus particle to the cell. Plays a major role in the determination of host range restriction and virulence. Class I viral fusion protein. Responsible for penetration of the virus into the cell cytoplasm by mediating the fusion of the membrane of the endocytosed virus particle with the endosomal membrane. Low pH in endosomes induce an irreversible conformational change in HEF2, releasing the fusion hydrophobic peptide. Several trimers are required to form a competent fusion pore. Displays a receptor-destroying activity which is a neuraminidate-O-acetyl esterase. This activity cleaves off any receptor on the cell surface, which would otherwise prevent virions release. These cleavages prevent self-aggregation and ensure the efficient spread of the progeny virus from cell to cell.</text>
</comment>
<comment type="catalytic activity">
    <reaction evidence="1">
        <text>N-acetyl-9-O-acetylneuraminate + H2O = N-acetylneuraminate + acetate + H(+)</text>
        <dbReference type="Rhea" id="RHEA:22600"/>
        <dbReference type="ChEBI" id="CHEBI:15377"/>
        <dbReference type="ChEBI" id="CHEBI:15378"/>
        <dbReference type="ChEBI" id="CHEBI:28999"/>
        <dbReference type="ChEBI" id="CHEBI:30089"/>
        <dbReference type="ChEBI" id="CHEBI:35418"/>
        <dbReference type="EC" id="3.1.1.53"/>
    </reaction>
</comment>
<comment type="catalytic activity">
    <reaction evidence="1">
        <text>N-acetyl-4-O-acetylneuraminate + H2O = N-acetylneuraminate + acetate + H(+)</text>
        <dbReference type="Rhea" id="RHEA:25564"/>
        <dbReference type="ChEBI" id="CHEBI:15377"/>
        <dbReference type="ChEBI" id="CHEBI:15378"/>
        <dbReference type="ChEBI" id="CHEBI:29006"/>
        <dbReference type="ChEBI" id="CHEBI:30089"/>
        <dbReference type="ChEBI" id="CHEBI:35418"/>
        <dbReference type="EC" id="3.1.1.53"/>
    </reaction>
</comment>
<comment type="subunit">
    <text evidence="1">Homotrimer of disulfide-linked HEF1-HEF2.</text>
</comment>
<comment type="subcellular location">
    <subcellularLocation>
        <location evidence="1">Virion membrane</location>
        <topology evidence="1">Single-pass type I membrane protein</topology>
    </subcellularLocation>
    <subcellularLocation>
        <location evidence="1">Host cell membrane</location>
        <topology evidence="1">Single-pass type I membrane protein</topology>
    </subcellularLocation>
</comment>
<comment type="PTM">
    <text evidence="1">In natural infection, inactive HEF is matured into HEF1 and HEF2 outside the cell by one or more trypsin-like, arginine-specific endoprotease.</text>
</comment>
<comment type="similarity">
    <text evidence="1">Belongs to the influenza viruses hemagglutinin family.</text>
</comment>
<feature type="chain" id="PRO_0000440766" description="Hemagglutinin-esterase-fusion glycoprotein chain 1" evidence="1">
    <location>
        <begin position="1"/>
        <end position="433"/>
    </location>
</feature>
<feature type="chain" id="PRO_0000039169" description="Hemagglutinin-esterase-fusion glycoprotein chain 2" evidence="1">
    <location>
        <begin position="434"/>
        <end position="642"/>
    </location>
</feature>
<feature type="topological domain" description="Extracellular" evidence="1">
    <location>
        <begin position="1"/>
        <end position="617"/>
    </location>
</feature>
<feature type="transmembrane region" description="Helical" evidence="1">
    <location>
        <begin position="618"/>
        <end position="638"/>
    </location>
</feature>
<feature type="topological domain" description="Cytoplasmic" evidence="1">
    <location>
        <begin position="639"/>
        <end position="642"/>
    </location>
</feature>
<feature type="region of interest" description="N-acetyl-9-O-acetylneuraminic acid binding" evidence="1">
    <location>
        <begin position="83"/>
        <end position="297"/>
    </location>
</feature>
<feature type="region of interest" description="Esterase domain-2" evidence="1">
    <location>
        <begin position="297"/>
        <end position="351"/>
    </location>
</feature>
<feature type="region of interest" description="Fusion domain-2" evidence="1">
    <location>
        <begin position="352"/>
        <end position="637"/>
    </location>
</feature>
<feature type="active site" description="Charge relay system" evidence="1">
    <location>
        <position position="353"/>
    </location>
</feature>
<feature type="active site" description="Charge relay system" evidence="1">
    <location>
        <position position="356"/>
    </location>
</feature>
<feature type="glycosylation site" description="N-linked (GlcNAc...) asparagine; by host" evidence="1">
    <location>
        <position position="13"/>
    </location>
</feature>
<feature type="glycosylation site" description="N-linked (GlcNAc...) asparagine; by host" evidence="1">
    <location>
        <position position="48"/>
    </location>
</feature>
<feature type="glycosylation site" description="N-linked (GlcNAc...) asparagine; by host" evidence="1">
    <location>
        <position position="131"/>
    </location>
</feature>
<feature type="glycosylation site" description="N-linked (GlcNAc...) asparagine; by host" evidence="1">
    <location>
        <position position="176"/>
    </location>
</feature>
<feature type="glycosylation site" description="N-linked (GlcNAc...) asparagine; by host" evidence="1">
    <location>
        <position position="382"/>
    </location>
</feature>
<feature type="glycosylation site" description="N-linked (GlcNAc...) asparagine; by host" evidence="1">
    <location>
        <position position="539"/>
    </location>
</feature>
<feature type="glycosylation site" description="N-linked (GlcNAc...) asparagine; by host" evidence="1">
    <location>
        <position position="590"/>
    </location>
</feature>
<feature type="disulfide bond" evidence="1">
    <location>
        <begin position="197"/>
        <end position="239"/>
    </location>
</feature>
<feature type="disulfide bond" evidence="1">
    <location>
        <begin position="216"/>
        <end position="303"/>
    </location>
</feature>
<feature type="disulfide bond" evidence="1">
    <location>
        <begin position="224"/>
        <end position="276"/>
    </location>
</feature>
<feature type="non-terminal residue">
    <location>
        <position position="1"/>
    </location>
</feature>
<dbReference type="EC" id="3.1.1.53" evidence="1"/>
<dbReference type="EMBL" id="M11637">
    <property type="protein sequence ID" value="AAA43795.1"/>
    <property type="molecule type" value="Genomic_RNA"/>
</dbReference>
<dbReference type="SMR" id="P07974"/>
<dbReference type="GlyCosmos" id="P07974">
    <property type="glycosylation" value="7 sites, No reported glycans"/>
</dbReference>
<dbReference type="GO" id="GO:0020002">
    <property type="term" value="C:host cell plasma membrane"/>
    <property type="evidence" value="ECO:0007669"/>
    <property type="project" value="UniProtKB-SubCell"/>
</dbReference>
<dbReference type="GO" id="GO:0016020">
    <property type="term" value="C:membrane"/>
    <property type="evidence" value="ECO:0007669"/>
    <property type="project" value="UniProtKB-KW"/>
</dbReference>
<dbReference type="GO" id="GO:0019031">
    <property type="term" value="C:viral envelope"/>
    <property type="evidence" value="ECO:0007669"/>
    <property type="project" value="UniProtKB-KW"/>
</dbReference>
<dbReference type="GO" id="GO:0055036">
    <property type="term" value="C:virion membrane"/>
    <property type="evidence" value="ECO:0007669"/>
    <property type="project" value="UniProtKB-SubCell"/>
</dbReference>
<dbReference type="GO" id="GO:0046789">
    <property type="term" value="F:host cell surface receptor binding"/>
    <property type="evidence" value="ECO:0007669"/>
    <property type="project" value="InterPro"/>
</dbReference>
<dbReference type="GO" id="GO:0106331">
    <property type="term" value="F:sialate 4-O-acetylesterase activity"/>
    <property type="evidence" value="ECO:0007669"/>
    <property type="project" value="RHEA"/>
</dbReference>
<dbReference type="GO" id="GO:0106330">
    <property type="term" value="F:sialate 9-O-acetylesterase activity"/>
    <property type="evidence" value="ECO:0007669"/>
    <property type="project" value="RHEA"/>
</dbReference>
<dbReference type="GO" id="GO:0075509">
    <property type="term" value="P:endocytosis involved in viral entry into host cell"/>
    <property type="evidence" value="ECO:0007669"/>
    <property type="project" value="UniProtKB-KW"/>
</dbReference>
<dbReference type="GO" id="GO:0039654">
    <property type="term" value="P:fusion of virus membrane with host endosome membrane"/>
    <property type="evidence" value="ECO:0007669"/>
    <property type="project" value="UniProtKB-KW"/>
</dbReference>
<dbReference type="GO" id="GO:0019064">
    <property type="term" value="P:fusion of virus membrane with host plasma membrane"/>
    <property type="evidence" value="ECO:0007669"/>
    <property type="project" value="InterPro"/>
</dbReference>
<dbReference type="GO" id="GO:0019062">
    <property type="term" value="P:virion attachment to host cell"/>
    <property type="evidence" value="ECO:0007669"/>
    <property type="project" value="UniProtKB-KW"/>
</dbReference>
<dbReference type="Gene3D" id="2.20.70.20">
    <property type="match status" value="2"/>
</dbReference>
<dbReference type="Gene3D" id="3.90.20.10">
    <property type="match status" value="1"/>
</dbReference>
<dbReference type="HAMAP" id="MF_04072">
    <property type="entry name" value="INFV_HEMA"/>
    <property type="match status" value="1"/>
</dbReference>
<dbReference type="InterPro" id="IPR008980">
    <property type="entry name" value="Capsid_hemagglutn"/>
</dbReference>
<dbReference type="InterPro" id="IPR007142">
    <property type="entry name" value="Hemagglutn-estrase_core"/>
</dbReference>
<dbReference type="InterPro" id="IPR003860">
    <property type="entry name" value="Hemagglutn-estrase_hemagglutn"/>
</dbReference>
<dbReference type="InterPro" id="IPR001364">
    <property type="entry name" value="Hemagglutn_influenz_A/B"/>
</dbReference>
<dbReference type="InterPro" id="IPR014831">
    <property type="entry name" value="Hemagglutn_stalk_influenz-C"/>
</dbReference>
<dbReference type="Pfam" id="PF03996">
    <property type="entry name" value="Hema_esterase"/>
    <property type="match status" value="1"/>
</dbReference>
<dbReference type="Pfam" id="PF02710">
    <property type="entry name" value="Hema_HEFG"/>
    <property type="match status" value="1"/>
</dbReference>
<dbReference type="Pfam" id="PF08720">
    <property type="entry name" value="Hema_stalk"/>
    <property type="match status" value="1"/>
</dbReference>
<dbReference type="SUPFAM" id="SSF58064">
    <property type="entry name" value="Influenza hemagglutinin (stalk)"/>
    <property type="match status" value="1"/>
</dbReference>
<dbReference type="SUPFAM" id="SSF52266">
    <property type="entry name" value="SGNH hydrolase"/>
    <property type="match status" value="1"/>
</dbReference>
<dbReference type="SUPFAM" id="SSF49818">
    <property type="entry name" value="Viral protein domain"/>
    <property type="match status" value="1"/>
</dbReference>
<protein>
    <recommendedName>
        <fullName evidence="1">Hemagglutinin-esterase-fusion glycoprotein</fullName>
        <shortName evidence="1">HEF</shortName>
        <ecNumber evidence="1">3.1.1.53</ecNumber>
    </recommendedName>
    <component>
        <recommendedName>
            <fullName evidence="1">Hemagglutinin-esterase-fusion glycoprotein chain 1</fullName>
            <shortName evidence="1">HEF1</shortName>
        </recommendedName>
    </component>
    <component>
        <recommendedName>
            <fullName evidence="1">Hemagglutinin-esterase-fusion glycoprotein chain 2</fullName>
            <shortName evidence="1">HEF2</shortName>
        </recommendedName>
    </component>
</protein>
<organism>
    <name type="scientific">Influenza C virus (strain C/Taylor/1233/1947)</name>
    <dbReference type="NCBI Taxonomy" id="11567"/>
    <lineage>
        <taxon>Viruses</taxon>
        <taxon>Riboviria</taxon>
        <taxon>Orthornavirae</taxon>
        <taxon>Negarnaviricota</taxon>
        <taxon>Polyploviricotina</taxon>
        <taxon>Insthoviricetes</taxon>
        <taxon>Articulavirales</taxon>
        <taxon>Orthomyxoviridae</taxon>
        <taxon>Gammainfluenzavirus</taxon>
        <taxon>Gammainfluenzavirus influenzae</taxon>
        <taxon>Influenza C virus</taxon>
    </lineage>
</organism>
<sequence length="642" mass="70762">AEKIKICLQKQVNSSFSLHNGFGGNLYATEEKRMFELVKPKAGASVLNQSTWIGFGDSRTDKSNSAFPRSADVSEKTADKFRSLSGGSLMLSMFGPPGKVDYLYQGCGKHKVFYEGVNWSPHAAINCYRKNWTDIKLNFQKNIYELASQSHCMSLVNALDKTIPLQVTAGVAKNCNNSFLKNPALYTQEVNPSKEICGKENLAFFTLPTQFGTYECKLHLVASCYFIYDSKEVYNKRGCDNYFQVIYDSSGKVVGGLDNRVSPYTGNTGDTPTMQCDMLQLKPGRYSVRSSPRFLLMPERSYCFDMKEKGLVTAVQSVWGKGRESDHAVDQAYLSTPGCMLIQKQKPYIGEADDHHGDQEMRELLSGLDYEARCISQSGWVNETSPFTEEYLLPPKFGRCPLAAKEESIPKIPDGLLIPTSGTDTIVTKPKSRIFGIDDLIIGLLFVAIVEAGIGGYLLGSRKESGGGVTKESAEKGFEKIGNDIQILRSSTNIAIEKLNDRITHDEQAIRDLTLEIENARSEALLGELGIIRALLVGNISIGLQESLWELASEITNRAGDLAVEVSPGCWIIDNNICDQSCQNFIFKFNETAPVPTIPPLDTKIDLQSDPFYWGSSLGLAITTPISLAALVISGIAICRTK</sequence>
<gene>
    <name evidence="1" type="primary">HE</name>
</gene>
<accession>P07974</accession>
<organismHost>
    <name type="scientific">Homo sapiens</name>
    <name type="common">Human</name>
    <dbReference type="NCBI Taxonomy" id="9606"/>
</organismHost>
<organismHost>
    <name type="scientific">Sus scrofa</name>
    <name type="common">Pig</name>
    <dbReference type="NCBI Taxonomy" id="9823"/>
</organismHost>
<proteinExistence type="inferred from homology"/>
<evidence type="ECO:0000255" key="1">
    <source>
        <dbReference type="HAMAP-Rule" id="MF_04072"/>
    </source>
</evidence>
<reference key="1">
    <citation type="journal article" date="1985" name="Virology">
        <title>Noncumulative sequence changes in the hemagglutinin genes of influenza C virus isolates.</title>
        <authorList>
            <person name="Buonagurio D.A."/>
            <person name="Nakada S."/>
            <person name="Desselberger U."/>
            <person name="Krystal M."/>
            <person name="Palese P."/>
        </authorList>
    </citation>
    <scope>NUCLEOTIDE SEQUENCE [GENOMIC RNA]</scope>
</reference>